<comment type="function">
    <text evidence="1">Responsible for the release of ribosomes from messenger RNA at the termination of protein biosynthesis. May increase the efficiency of translation by recycling ribosomes from one round of translation to another.</text>
</comment>
<comment type="subcellular location">
    <subcellularLocation>
        <location evidence="1">Cytoplasm</location>
    </subcellularLocation>
</comment>
<comment type="similarity">
    <text evidence="1">Belongs to the RRF family.</text>
</comment>
<protein>
    <recommendedName>
        <fullName evidence="1">Ribosome-recycling factor</fullName>
        <shortName evidence="1">RRF</shortName>
    </recommendedName>
    <alternativeName>
        <fullName evidence="1">Ribosome-releasing factor</fullName>
    </alternativeName>
</protein>
<reference key="1">
    <citation type="submission" date="2006-10" db="EMBL/GenBank/DDBJ databases">
        <title>Complete sequence of Syntrophobacter fumaroxidans MPOB.</title>
        <authorList>
            <consortium name="US DOE Joint Genome Institute"/>
            <person name="Copeland A."/>
            <person name="Lucas S."/>
            <person name="Lapidus A."/>
            <person name="Barry K."/>
            <person name="Detter J.C."/>
            <person name="Glavina del Rio T."/>
            <person name="Hammon N."/>
            <person name="Israni S."/>
            <person name="Pitluck S."/>
            <person name="Goltsman E.G."/>
            <person name="Martinez M."/>
            <person name="Schmutz J."/>
            <person name="Larimer F."/>
            <person name="Land M."/>
            <person name="Hauser L."/>
            <person name="Kyrpides N."/>
            <person name="Kim E."/>
            <person name="Boone D.R."/>
            <person name="Brockman F."/>
            <person name="Culley D."/>
            <person name="Ferry J."/>
            <person name="Gunsalus R."/>
            <person name="McInerney M.J."/>
            <person name="Morrison M."/>
            <person name="Plugge C."/>
            <person name="Rohlin L."/>
            <person name="Scholten J."/>
            <person name="Sieber J."/>
            <person name="Stams A.J.M."/>
            <person name="Worm P."/>
            <person name="Henstra A.M."/>
            <person name="Richardson P."/>
        </authorList>
    </citation>
    <scope>NUCLEOTIDE SEQUENCE [LARGE SCALE GENOMIC DNA]</scope>
    <source>
        <strain>DSM 10017 / MPOB</strain>
    </source>
</reference>
<proteinExistence type="inferred from homology"/>
<accession>A0LJ66</accession>
<gene>
    <name evidence="1" type="primary">frr</name>
    <name type="ordered locus">Sfum_1781</name>
</gene>
<sequence>MLNDVFADARDRMSKALDNLETDYKRLRTGRASVSLVDGIRAEYYGTPTALNQLATITIPEPRTIMIQPWDTSVIGEIEKSILKSELGLTPMSDGKVIRINIPVLTADRRRELVKVVKKMSEESKVAVRNIRRDVNEMIKDLKKEKEISEDEQFKAQEETQRITDDFIKKIDVVYSAKEKEILEI</sequence>
<evidence type="ECO:0000255" key="1">
    <source>
        <dbReference type="HAMAP-Rule" id="MF_00040"/>
    </source>
</evidence>
<dbReference type="EMBL" id="CP000478">
    <property type="protein sequence ID" value="ABK17468.1"/>
    <property type="molecule type" value="Genomic_DNA"/>
</dbReference>
<dbReference type="RefSeq" id="WP_011698638.1">
    <property type="nucleotide sequence ID" value="NC_008554.1"/>
</dbReference>
<dbReference type="SMR" id="A0LJ66"/>
<dbReference type="FunCoup" id="A0LJ66">
    <property type="interactions" value="556"/>
</dbReference>
<dbReference type="STRING" id="335543.Sfum_1781"/>
<dbReference type="KEGG" id="sfu:Sfum_1781"/>
<dbReference type="eggNOG" id="COG0233">
    <property type="taxonomic scope" value="Bacteria"/>
</dbReference>
<dbReference type="HOGENOM" id="CLU_073981_2_0_7"/>
<dbReference type="InParanoid" id="A0LJ66"/>
<dbReference type="OrthoDB" id="9804006at2"/>
<dbReference type="Proteomes" id="UP000001784">
    <property type="component" value="Chromosome"/>
</dbReference>
<dbReference type="GO" id="GO:0005737">
    <property type="term" value="C:cytoplasm"/>
    <property type="evidence" value="ECO:0007669"/>
    <property type="project" value="UniProtKB-SubCell"/>
</dbReference>
<dbReference type="GO" id="GO:0043023">
    <property type="term" value="F:ribosomal large subunit binding"/>
    <property type="evidence" value="ECO:0007669"/>
    <property type="project" value="TreeGrafter"/>
</dbReference>
<dbReference type="GO" id="GO:0006415">
    <property type="term" value="P:translational termination"/>
    <property type="evidence" value="ECO:0007669"/>
    <property type="project" value="UniProtKB-UniRule"/>
</dbReference>
<dbReference type="CDD" id="cd00520">
    <property type="entry name" value="RRF"/>
    <property type="match status" value="1"/>
</dbReference>
<dbReference type="FunFam" id="1.10.132.20:FF:000001">
    <property type="entry name" value="Ribosome-recycling factor"/>
    <property type="match status" value="1"/>
</dbReference>
<dbReference type="FunFam" id="3.30.1360.40:FF:000001">
    <property type="entry name" value="Ribosome-recycling factor"/>
    <property type="match status" value="1"/>
</dbReference>
<dbReference type="Gene3D" id="3.30.1360.40">
    <property type="match status" value="1"/>
</dbReference>
<dbReference type="Gene3D" id="1.10.132.20">
    <property type="entry name" value="Ribosome-recycling factor"/>
    <property type="match status" value="1"/>
</dbReference>
<dbReference type="HAMAP" id="MF_00040">
    <property type="entry name" value="RRF"/>
    <property type="match status" value="1"/>
</dbReference>
<dbReference type="InterPro" id="IPR002661">
    <property type="entry name" value="Ribosome_recyc_fac"/>
</dbReference>
<dbReference type="InterPro" id="IPR023584">
    <property type="entry name" value="Ribosome_recyc_fac_dom"/>
</dbReference>
<dbReference type="InterPro" id="IPR036191">
    <property type="entry name" value="RRF_sf"/>
</dbReference>
<dbReference type="NCBIfam" id="TIGR00496">
    <property type="entry name" value="frr"/>
    <property type="match status" value="1"/>
</dbReference>
<dbReference type="PANTHER" id="PTHR20982:SF3">
    <property type="entry name" value="MITOCHONDRIAL RIBOSOME RECYCLING FACTOR PSEUDO 1"/>
    <property type="match status" value="1"/>
</dbReference>
<dbReference type="PANTHER" id="PTHR20982">
    <property type="entry name" value="RIBOSOME RECYCLING FACTOR"/>
    <property type="match status" value="1"/>
</dbReference>
<dbReference type="Pfam" id="PF01765">
    <property type="entry name" value="RRF"/>
    <property type="match status" value="1"/>
</dbReference>
<dbReference type="SUPFAM" id="SSF55194">
    <property type="entry name" value="Ribosome recycling factor, RRF"/>
    <property type="match status" value="1"/>
</dbReference>
<keyword id="KW-0963">Cytoplasm</keyword>
<keyword id="KW-0648">Protein biosynthesis</keyword>
<keyword id="KW-1185">Reference proteome</keyword>
<feature type="chain" id="PRO_1000003294" description="Ribosome-recycling factor">
    <location>
        <begin position="1"/>
        <end position="185"/>
    </location>
</feature>
<name>RRF_SYNFM</name>
<organism>
    <name type="scientific">Syntrophobacter fumaroxidans (strain DSM 10017 / MPOB)</name>
    <dbReference type="NCBI Taxonomy" id="335543"/>
    <lineage>
        <taxon>Bacteria</taxon>
        <taxon>Pseudomonadati</taxon>
        <taxon>Thermodesulfobacteriota</taxon>
        <taxon>Syntrophobacteria</taxon>
        <taxon>Syntrophobacterales</taxon>
        <taxon>Syntrophobacteraceae</taxon>
        <taxon>Syntrophobacter</taxon>
    </lineage>
</organism>